<organismHost>
    <name type="scientific">Haemophilus influenzae</name>
    <dbReference type="NCBI Taxonomy" id="727"/>
</organismHost>
<keyword id="KW-1185">Reference proteome</keyword>
<protein>
    <recommendedName>
        <fullName>Uncharacterized 8.9 kDa protein in int-C1 intergenic region</fullName>
    </recommendedName>
    <alternativeName>
        <fullName>ORF18</fullName>
    </alternativeName>
    <alternativeName>
        <fullName>ORF4</fullName>
    </alternativeName>
</protein>
<organism>
    <name type="scientific">Haemophilus phage HP1 (strain HP1c1)</name>
    <name type="common">Bacteriophage HP1</name>
    <dbReference type="NCBI Taxonomy" id="1289570"/>
    <lineage>
        <taxon>Viruses</taxon>
        <taxon>Duplodnaviria</taxon>
        <taxon>Heunggongvirae</taxon>
        <taxon>Uroviricota</taxon>
        <taxon>Caudoviricetes</taxon>
        <taxon>Peduoviridae</taxon>
        <taxon>Hpunavirus</taxon>
        <taxon>Haemophilus phage HP1</taxon>
    </lineage>
</organism>
<dbReference type="EMBL" id="U24159">
    <property type="protein sequence ID" value="AAB09186.1"/>
    <property type="molecule type" value="Genomic_DNA"/>
</dbReference>
<dbReference type="PIR" id="S72333">
    <property type="entry name" value="S72333"/>
</dbReference>
<dbReference type="RefSeq" id="NP_043470.1">
    <property type="nucleotide sequence ID" value="NC_001697.1"/>
</dbReference>
<dbReference type="SMR" id="P51703"/>
<dbReference type="GeneID" id="1261107"/>
<dbReference type="KEGG" id="vg:1261107"/>
<dbReference type="Proteomes" id="UP000001713">
    <property type="component" value="Segment"/>
</dbReference>
<name>YO04_BPHC1</name>
<sequence>MCFFFKLSKPKTTPHTNSNIVEIEYITSNGNSKQQIGELVNLELDGDDDVGFYYVLTLKLPNGRNKKFKEYHLNGKIKFNGKRFSDLKELKEYTSTH</sequence>
<accession>P51703</accession>
<proteinExistence type="predicted"/>
<feature type="chain" id="PRO_0000165318" description="Uncharacterized 8.9 kDa protein in int-C1 intergenic region">
    <location>
        <begin position="1"/>
        <end position="97"/>
    </location>
</feature>
<reference key="1">
    <citation type="journal article" date="1994" name="Mol. Microbiol.">
        <title>Identification of an HP1 phage protein required for site-specific excision.</title>
        <authorList>
            <person name="Esposito D."/>
            <person name="Scocca J.J."/>
        </authorList>
    </citation>
    <scope>NUCLEOTIDE SEQUENCE [GENOMIC DNA]</scope>
</reference>
<reference key="2">
    <citation type="journal article" date="1996" name="Nucleic Acids Res.">
        <title>The complete nucleotide sequence of bacteriophage HP1 DNA.</title>
        <authorList>
            <person name="Esposito D."/>
            <person name="Fitzmaurice W.P."/>
            <person name="Benjamin R.C."/>
            <person name="Goodman S.D."/>
            <person name="Waldman A.S."/>
            <person name="Scocca J.J."/>
        </authorList>
    </citation>
    <scope>NUCLEOTIDE SEQUENCE [LARGE SCALE GENOMIC DNA]</scope>
</reference>